<organism>
    <name type="scientific">Caenorhabditis elegans</name>
    <dbReference type="NCBI Taxonomy" id="6239"/>
    <lineage>
        <taxon>Eukaryota</taxon>
        <taxon>Metazoa</taxon>
        <taxon>Ecdysozoa</taxon>
        <taxon>Nematoda</taxon>
        <taxon>Chromadorea</taxon>
        <taxon>Rhabditida</taxon>
        <taxon>Rhabditina</taxon>
        <taxon>Rhabditomorpha</taxon>
        <taxon>Rhabditoidea</taxon>
        <taxon>Rhabditidae</taxon>
        <taxon>Peloderinae</taxon>
        <taxon>Caenorhabditis</taxon>
    </lineage>
</organism>
<feature type="chain" id="PRO_0000446645" description="Desumoylating isopeptidase 1 homolog">
    <location>
        <begin position="1"/>
        <end position="334"/>
    </location>
</feature>
<feature type="domain" description="PPPDE" evidence="3">
    <location>
        <begin position="30"/>
        <end position="174"/>
    </location>
</feature>
<feature type="region of interest" description="Disordered" evidence="4">
    <location>
        <begin position="310"/>
        <end position="334"/>
    </location>
</feature>
<feature type="compositionally biased region" description="Polar residues" evidence="4">
    <location>
        <begin position="310"/>
        <end position="325"/>
    </location>
</feature>
<feature type="active site" evidence="3">
    <location>
        <position position="55"/>
    </location>
</feature>
<feature type="active site" evidence="3">
    <location>
        <position position="133"/>
    </location>
</feature>
<feature type="splice variant" id="VSP_060089" description="In isoform b.">
    <location>
        <begin position="1"/>
        <end position="19"/>
    </location>
</feature>
<protein>
    <recommendedName>
        <fullName>Desumoylating isopeptidase 1 homolog</fullName>
        <shortName>DeSI-1</shortName>
        <ecNumber>3.4.-.-</ecNumber>
    </recommendedName>
    <alternativeName>
        <fullName evidence="6">Polyubiquitinated substrate transporter</fullName>
        <shortName evidence="6">POST</shortName>
    </alternativeName>
</protein>
<accession>H2KZK4</accession>
<accession>Q8MNS8</accession>
<gene>
    <name evidence="8" type="ORF">F36D4.5</name>
</gene>
<name>DESI1_CAEEL</name>
<proteinExistence type="evidence at transcript level"/>
<sequence>MLTDLFYSTFGCLYSPTSTMDVMGTARRKTVVRLNVYDMYWLNDYASNIGVGIFHSGIEVFGVEYAYGGHPYQFSGVFENSPQDAEELGETFKFKESIVVGETERSTSDIRKLIKSLGEDFRGDRYHLISRNCNHFSAVLARELTGKDIPGWINRLANLSGSIPFLEKCIPQEWLTPIVLQASVDEKKRGSVDSAEEATEKLVVRSLNDSRTTILDNRTANGAIIMSASSSNSDRICMSPSSSSSASSCDTLDYDDLIVQTPSTFSSEKKSRSNSPPIFRIWNTIKATINGTQQTAPTGAATVIPASSASNIGKTNSTPGTTSNGLAKPTCSEC</sequence>
<evidence type="ECO:0000250" key="1">
    <source>
        <dbReference type="UniProtKB" id="Q6ICB0"/>
    </source>
</evidence>
<evidence type="ECO:0000250" key="2">
    <source>
        <dbReference type="UniProtKB" id="Q9CQT7"/>
    </source>
</evidence>
<evidence type="ECO:0000255" key="3">
    <source>
        <dbReference type="PROSITE-ProRule" id="PRU01205"/>
    </source>
</evidence>
<evidence type="ECO:0000256" key="4">
    <source>
        <dbReference type="SAM" id="MobiDB-lite"/>
    </source>
</evidence>
<evidence type="ECO:0000269" key="5">
    <source>
    </source>
</evidence>
<evidence type="ECO:0000303" key="6">
    <source>
    </source>
</evidence>
<evidence type="ECO:0000305" key="7"/>
<evidence type="ECO:0000312" key="8">
    <source>
        <dbReference type="WormBase" id="F36D4.5a"/>
    </source>
</evidence>
<keyword id="KW-0025">Alternative splicing</keyword>
<keyword id="KW-0963">Cytoplasm</keyword>
<keyword id="KW-0378">Hydrolase</keyword>
<keyword id="KW-0539">Nucleus</keyword>
<keyword id="KW-0645">Protease</keyword>
<keyword id="KW-1185">Reference proteome</keyword>
<comment type="function">
    <text evidence="2 5">Protease which deconjugates SUMO from some substrate proteins. Has isopeptidase but not SUMO-processing activity (By similarity). Collaborates with ubql-1 in the export of ubiquitinated proteins from the nucleus to the cytoplasm (PubMed:29666234).</text>
</comment>
<comment type="subcellular location">
    <subcellularLocation>
        <location evidence="1">Cytoplasm</location>
    </subcellularLocation>
    <subcellularLocation>
        <location evidence="1">Nucleus</location>
    </subcellularLocation>
</comment>
<comment type="alternative products">
    <event type="alternative splicing"/>
    <isoform>
        <id>H2KZK4-1</id>
        <name>a</name>
        <sequence type="displayed"/>
    </isoform>
    <isoform>
        <id>H2KZK4-2</id>
        <name>b</name>
        <sequence type="described" ref="VSP_060089"/>
    </isoform>
</comment>
<comment type="tissue specificity">
    <text evidence="5">Expressed in the pharynx, hypodermis, intestine, head neuron and tail neuron.</text>
</comment>
<comment type="disruption phenotype">
    <text evidence="5">Worms lacking both POST and ubql-1 have a shorter lifespan and display an accumulation of ubiquitinated proteins in the nucleus.</text>
</comment>
<comment type="similarity">
    <text evidence="7">Belongs to the DeSI family.</text>
</comment>
<dbReference type="EC" id="3.4.-.-"/>
<dbReference type="EMBL" id="BX284605">
    <property type="protein sequence ID" value="CCD68607.1"/>
    <property type="molecule type" value="Genomic_DNA"/>
</dbReference>
<dbReference type="EMBL" id="BX284605">
    <property type="protein sequence ID" value="CCD68608.1"/>
    <property type="molecule type" value="Genomic_DNA"/>
</dbReference>
<dbReference type="RefSeq" id="NP_741591.1">
    <molecule id="H2KZK4-1"/>
    <property type="nucleotide sequence ID" value="NM_171506.2"/>
</dbReference>
<dbReference type="RefSeq" id="NP_741592.1">
    <molecule id="H2KZK4-2"/>
    <property type="nucleotide sequence ID" value="NM_171507.8"/>
</dbReference>
<dbReference type="SMR" id="H2KZK4"/>
<dbReference type="FunCoup" id="H2KZK4">
    <property type="interactions" value="424"/>
</dbReference>
<dbReference type="STRING" id="6239.F36D4.5a.1"/>
<dbReference type="PaxDb" id="6239-F36D4.5a"/>
<dbReference type="PeptideAtlas" id="H2KZK4"/>
<dbReference type="EnsemblMetazoa" id="F36D4.5a.1">
    <molecule id="H2KZK4-1"/>
    <property type="protein sequence ID" value="F36D4.5a.1"/>
    <property type="gene ID" value="WBGene00018090"/>
</dbReference>
<dbReference type="EnsemblMetazoa" id="F36D4.5a.2">
    <molecule id="H2KZK4-1"/>
    <property type="protein sequence ID" value="F36D4.5a.2"/>
    <property type="gene ID" value="WBGene00018090"/>
</dbReference>
<dbReference type="EnsemblMetazoa" id="F36D4.5a.3">
    <molecule id="H2KZK4-1"/>
    <property type="protein sequence ID" value="F36D4.5a.3"/>
    <property type="gene ID" value="WBGene00018090"/>
</dbReference>
<dbReference type="EnsemblMetazoa" id="F36D4.5b.1">
    <molecule id="H2KZK4-2"/>
    <property type="protein sequence ID" value="F36D4.5b.1"/>
    <property type="gene ID" value="WBGene00018090"/>
</dbReference>
<dbReference type="EnsemblMetazoa" id="F36D4.5b.2">
    <molecule id="H2KZK4-2"/>
    <property type="protein sequence ID" value="F36D4.5b.2"/>
    <property type="gene ID" value="WBGene00018090"/>
</dbReference>
<dbReference type="EnsemblMetazoa" id="F36D4.5b.3">
    <molecule id="H2KZK4-2"/>
    <property type="protein sequence ID" value="F36D4.5b.3"/>
    <property type="gene ID" value="WBGene00018090"/>
</dbReference>
<dbReference type="EnsemblMetazoa" id="F36D4.5b.4">
    <molecule id="H2KZK4-2"/>
    <property type="protein sequence ID" value="F36D4.5b.4"/>
    <property type="gene ID" value="WBGene00018090"/>
</dbReference>
<dbReference type="GeneID" id="179324"/>
<dbReference type="KEGG" id="cel:CELE_F36D4.5"/>
<dbReference type="UCSC" id="F36D4.5b.1">
    <property type="organism name" value="c. elegans"/>
</dbReference>
<dbReference type="AGR" id="WB:WBGene00018090"/>
<dbReference type="CTD" id="179324"/>
<dbReference type="WormBase" id="F36D4.5a">
    <molecule id="H2KZK4-1"/>
    <property type="protein sequence ID" value="CE28391"/>
    <property type="gene ID" value="WBGene00018090"/>
</dbReference>
<dbReference type="WormBase" id="F36D4.5b">
    <molecule id="H2KZK4-2"/>
    <property type="protein sequence ID" value="CE30778"/>
    <property type="gene ID" value="WBGene00018090"/>
</dbReference>
<dbReference type="eggNOG" id="KOG0324">
    <property type="taxonomic scope" value="Eukaryota"/>
</dbReference>
<dbReference type="GeneTree" id="ENSGT00940000171392"/>
<dbReference type="HOGENOM" id="CLU_076704_0_0_1"/>
<dbReference type="InParanoid" id="H2KZK4"/>
<dbReference type="OMA" id="KCIPQEW"/>
<dbReference type="OrthoDB" id="412286at2759"/>
<dbReference type="PhylomeDB" id="H2KZK4"/>
<dbReference type="PRO" id="PR:H2KZK4"/>
<dbReference type="Proteomes" id="UP000001940">
    <property type="component" value="Chromosome V"/>
</dbReference>
<dbReference type="Bgee" id="WBGene00018090">
    <property type="expression patterns" value="Expressed in germ line (C elegans) and 4 other cell types or tissues"/>
</dbReference>
<dbReference type="GO" id="GO:0005737">
    <property type="term" value="C:cytoplasm"/>
    <property type="evidence" value="ECO:0007669"/>
    <property type="project" value="UniProtKB-SubCell"/>
</dbReference>
<dbReference type="GO" id="GO:0005634">
    <property type="term" value="C:nucleus"/>
    <property type="evidence" value="ECO:0007669"/>
    <property type="project" value="UniProtKB-SubCell"/>
</dbReference>
<dbReference type="GO" id="GO:0101005">
    <property type="term" value="F:deubiquitinase activity"/>
    <property type="evidence" value="ECO:0000318"/>
    <property type="project" value="GO_Central"/>
</dbReference>
<dbReference type="GO" id="GO:0006508">
    <property type="term" value="P:proteolysis"/>
    <property type="evidence" value="ECO:0007669"/>
    <property type="project" value="UniProtKB-KW"/>
</dbReference>
<dbReference type="Gene3D" id="3.90.1720.30">
    <property type="entry name" value="PPPDE domains"/>
    <property type="match status" value="1"/>
</dbReference>
<dbReference type="InterPro" id="IPR008580">
    <property type="entry name" value="PPPDE_dom"/>
</dbReference>
<dbReference type="InterPro" id="IPR042266">
    <property type="entry name" value="PPPDE_sf"/>
</dbReference>
<dbReference type="PANTHER" id="PTHR12378">
    <property type="entry name" value="DESUMOYLATING ISOPEPTIDASE"/>
    <property type="match status" value="1"/>
</dbReference>
<dbReference type="PANTHER" id="PTHR12378:SF80">
    <property type="entry name" value="IP06716P-RELATED"/>
    <property type="match status" value="1"/>
</dbReference>
<dbReference type="Pfam" id="PF05903">
    <property type="entry name" value="Peptidase_C97"/>
    <property type="match status" value="1"/>
</dbReference>
<dbReference type="SMART" id="SM01179">
    <property type="entry name" value="DUF862"/>
    <property type="match status" value="1"/>
</dbReference>
<dbReference type="PROSITE" id="PS51858">
    <property type="entry name" value="PPPDE"/>
    <property type="match status" value="1"/>
</dbReference>
<reference key="1">
    <citation type="journal article" date="1998" name="Science">
        <title>Genome sequence of the nematode C. elegans: a platform for investigating biology.</title>
        <authorList>
            <consortium name="The C. elegans sequencing consortium"/>
        </authorList>
    </citation>
    <scope>NUCLEOTIDE SEQUENCE [LARGE SCALE GENOMIC DNA]</scope>
    <source>
        <strain>Bristol N2</strain>
    </source>
</reference>
<reference key="2">
    <citation type="journal article" date="2018" name="Proc. Natl. Acad. Sci. U.S.A.">
        <title>Nuclear export of ubiquitinated proteins via the UBIN-POST system.</title>
        <authorList>
            <person name="Hirayama S."/>
            <person name="Sugihara M."/>
            <person name="Morito D."/>
            <person name="Iemura S.I."/>
            <person name="Natsume T."/>
            <person name="Murata S."/>
            <person name="Nagata K."/>
        </authorList>
    </citation>
    <scope>FUNCTION</scope>
    <scope>TISSUE SPECIFICITY</scope>
    <scope>DISRUPTION PHENOTYPE</scope>
</reference>